<protein>
    <recommendedName>
        <fullName>BCL2/adenovirus E1B 19 kDa protein-interacting protein 2</fullName>
    </recommendedName>
</protein>
<organism>
    <name type="scientific">Homo sapiens</name>
    <name type="common">Human</name>
    <dbReference type="NCBI Taxonomy" id="9606"/>
    <lineage>
        <taxon>Eukaryota</taxon>
        <taxon>Metazoa</taxon>
        <taxon>Chordata</taxon>
        <taxon>Craniata</taxon>
        <taxon>Vertebrata</taxon>
        <taxon>Euteleostomi</taxon>
        <taxon>Mammalia</taxon>
        <taxon>Eutheria</taxon>
        <taxon>Euarchontoglires</taxon>
        <taxon>Primates</taxon>
        <taxon>Haplorrhini</taxon>
        <taxon>Catarrhini</taxon>
        <taxon>Hominidae</taxon>
        <taxon>Homo</taxon>
    </lineage>
</organism>
<reference key="1">
    <citation type="journal article" date="1994" name="Cell">
        <title>Adenovirus E1B 19 kDa and Bcl-2 proteins interact with a common set of cellular proteins.</title>
        <authorList>
            <person name="Boyd J.M."/>
            <person name="Malstrom S."/>
            <person name="Subramanian T."/>
            <person name="Venkatesh L.K."/>
            <person name="Schaeper U."/>
            <person name="Elangovan B."/>
            <person name="D'Sa-Eipper C."/>
            <person name="Chinnadurai G."/>
        </authorList>
    </citation>
    <scope>NUCLEOTIDE SEQUENCE [MRNA] (ISOFORM 1)</scope>
</reference>
<reference key="2">
    <citation type="journal article" date="2004" name="Nat. Genet.">
        <title>Complete sequencing and characterization of 21,243 full-length human cDNAs.</title>
        <authorList>
            <person name="Ota T."/>
            <person name="Suzuki Y."/>
            <person name="Nishikawa T."/>
            <person name="Otsuki T."/>
            <person name="Sugiyama T."/>
            <person name="Irie R."/>
            <person name="Wakamatsu A."/>
            <person name="Hayashi K."/>
            <person name="Sato H."/>
            <person name="Nagai K."/>
            <person name="Kimura K."/>
            <person name="Makita H."/>
            <person name="Sekine M."/>
            <person name="Obayashi M."/>
            <person name="Nishi T."/>
            <person name="Shibahara T."/>
            <person name="Tanaka T."/>
            <person name="Ishii S."/>
            <person name="Yamamoto J."/>
            <person name="Saito K."/>
            <person name="Kawai Y."/>
            <person name="Isono Y."/>
            <person name="Nakamura Y."/>
            <person name="Nagahari K."/>
            <person name="Murakami K."/>
            <person name="Yasuda T."/>
            <person name="Iwayanagi T."/>
            <person name="Wagatsuma M."/>
            <person name="Shiratori A."/>
            <person name="Sudo H."/>
            <person name="Hosoiri T."/>
            <person name="Kaku Y."/>
            <person name="Kodaira H."/>
            <person name="Kondo H."/>
            <person name="Sugawara M."/>
            <person name="Takahashi M."/>
            <person name="Kanda K."/>
            <person name="Yokoi T."/>
            <person name="Furuya T."/>
            <person name="Kikkawa E."/>
            <person name="Omura Y."/>
            <person name="Abe K."/>
            <person name="Kamihara K."/>
            <person name="Katsuta N."/>
            <person name="Sato K."/>
            <person name="Tanikawa M."/>
            <person name="Yamazaki M."/>
            <person name="Ninomiya K."/>
            <person name="Ishibashi T."/>
            <person name="Yamashita H."/>
            <person name="Murakawa K."/>
            <person name="Fujimori K."/>
            <person name="Tanai H."/>
            <person name="Kimata M."/>
            <person name="Watanabe M."/>
            <person name="Hiraoka S."/>
            <person name="Chiba Y."/>
            <person name="Ishida S."/>
            <person name="Ono Y."/>
            <person name="Takiguchi S."/>
            <person name="Watanabe S."/>
            <person name="Yosida M."/>
            <person name="Hotuta T."/>
            <person name="Kusano J."/>
            <person name="Kanehori K."/>
            <person name="Takahashi-Fujii A."/>
            <person name="Hara H."/>
            <person name="Tanase T.-O."/>
            <person name="Nomura Y."/>
            <person name="Togiya S."/>
            <person name="Komai F."/>
            <person name="Hara R."/>
            <person name="Takeuchi K."/>
            <person name="Arita M."/>
            <person name="Imose N."/>
            <person name="Musashino K."/>
            <person name="Yuuki H."/>
            <person name="Oshima A."/>
            <person name="Sasaki N."/>
            <person name="Aotsuka S."/>
            <person name="Yoshikawa Y."/>
            <person name="Matsunawa H."/>
            <person name="Ichihara T."/>
            <person name="Shiohata N."/>
            <person name="Sano S."/>
            <person name="Moriya S."/>
            <person name="Momiyama H."/>
            <person name="Satoh N."/>
            <person name="Takami S."/>
            <person name="Terashima Y."/>
            <person name="Suzuki O."/>
            <person name="Nakagawa S."/>
            <person name="Senoh A."/>
            <person name="Mizoguchi H."/>
            <person name="Goto Y."/>
            <person name="Shimizu F."/>
            <person name="Wakebe H."/>
            <person name="Hishigaki H."/>
            <person name="Watanabe T."/>
            <person name="Sugiyama A."/>
            <person name="Takemoto M."/>
            <person name="Kawakami B."/>
            <person name="Yamazaki M."/>
            <person name="Watanabe K."/>
            <person name="Kumagai A."/>
            <person name="Itakura S."/>
            <person name="Fukuzumi Y."/>
            <person name="Fujimori Y."/>
            <person name="Komiyama M."/>
            <person name="Tashiro H."/>
            <person name="Tanigami A."/>
            <person name="Fujiwara T."/>
            <person name="Ono T."/>
            <person name="Yamada K."/>
            <person name="Fujii Y."/>
            <person name="Ozaki K."/>
            <person name="Hirao M."/>
            <person name="Ohmori Y."/>
            <person name="Kawabata A."/>
            <person name="Hikiji T."/>
            <person name="Kobatake N."/>
            <person name="Inagaki H."/>
            <person name="Ikema Y."/>
            <person name="Okamoto S."/>
            <person name="Okitani R."/>
            <person name="Kawakami T."/>
            <person name="Noguchi S."/>
            <person name="Itoh T."/>
            <person name="Shigeta K."/>
            <person name="Senba T."/>
            <person name="Matsumura K."/>
            <person name="Nakajima Y."/>
            <person name="Mizuno T."/>
            <person name="Morinaga M."/>
            <person name="Sasaki M."/>
            <person name="Togashi T."/>
            <person name="Oyama M."/>
            <person name="Hata H."/>
            <person name="Watanabe M."/>
            <person name="Komatsu T."/>
            <person name="Mizushima-Sugano J."/>
            <person name="Satoh T."/>
            <person name="Shirai Y."/>
            <person name="Takahashi Y."/>
            <person name="Nakagawa K."/>
            <person name="Okumura K."/>
            <person name="Nagase T."/>
            <person name="Nomura N."/>
            <person name="Kikuchi H."/>
            <person name="Masuho Y."/>
            <person name="Yamashita R."/>
            <person name="Nakai K."/>
            <person name="Yada T."/>
            <person name="Nakamura Y."/>
            <person name="Ohara O."/>
            <person name="Isogai T."/>
            <person name="Sugano S."/>
        </authorList>
    </citation>
    <scope>NUCLEOTIDE SEQUENCE [LARGE SCALE MRNA] (ISOFORM 2)</scope>
    <source>
        <tissue>Brain</tissue>
    </source>
</reference>
<reference key="3">
    <citation type="submission" date="2003-04" db="EMBL/GenBank/DDBJ databases">
        <authorList>
            <consortium name="NIEHS SNPs program"/>
        </authorList>
    </citation>
    <scope>NUCLEOTIDE SEQUENCE [GENOMIC DNA]</scope>
    <scope>VARIANT THR-24</scope>
</reference>
<reference key="4">
    <citation type="journal article" date="2006" name="Nature">
        <title>Analysis of the DNA sequence and duplication history of human chromosome 15.</title>
        <authorList>
            <person name="Zody M.C."/>
            <person name="Garber M."/>
            <person name="Sharpe T."/>
            <person name="Young S.K."/>
            <person name="Rowen L."/>
            <person name="O'Neill K."/>
            <person name="Whittaker C.A."/>
            <person name="Kamal M."/>
            <person name="Chang J.L."/>
            <person name="Cuomo C.A."/>
            <person name="Dewar K."/>
            <person name="FitzGerald M.G."/>
            <person name="Kodira C.D."/>
            <person name="Madan A."/>
            <person name="Qin S."/>
            <person name="Yang X."/>
            <person name="Abbasi N."/>
            <person name="Abouelleil A."/>
            <person name="Arachchi H.M."/>
            <person name="Baradarani L."/>
            <person name="Birditt B."/>
            <person name="Bloom S."/>
            <person name="Bloom T."/>
            <person name="Borowsky M.L."/>
            <person name="Burke J."/>
            <person name="Butler J."/>
            <person name="Cook A."/>
            <person name="DeArellano K."/>
            <person name="DeCaprio D."/>
            <person name="Dorris L. III"/>
            <person name="Dors M."/>
            <person name="Eichler E.E."/>
            <person name="Engels R."/>
            <person name="Fahey J."/>
            <person name="Fleetwood P."/>
            <person name="Friedman C."/>
            <person name="Gearin G."/>
            <person name="Hall J.L."/>
            <person name="Hensley G."/>
            <person name="Johnson E."/>
            <person name="Jones C."/>
            <person name="Kamat A."/>
            <person name="Kaur A."/>
            <person name="Locke D.P."/>
            <person name="Madan A."/>
            <person name="Munson G."/>
            <person name="Jaffe D.B."/>
            <person name="Lui A."/>
            <person name="Macdonald P."/>
            <person name="Mauceli E."/>
            <person name="Naylor J.W."/>
            <person name="Nesbitt R."/>
            <person name="Nicol R."/>
            <person name="O'Leary S.B."/>
            <person name="Ratcliffe A."/>
            <person name="Rounsley S."/>
            <person name="She X."/>
            <person name="Sneddon K.M.B."/>
            <person name="Stewart S."/>
            <person name="Sougnez C."/>
            <person name="Stone S.M."/>
            <person name="Topham K."/>
            <person name="Vincent D."/>
            <person name="Wang S."/>
            <person name="Zimmer A.R."/>
            <person name="Birren B.W."/>
            <person name="Hood L."/>
            <person name="Lander E.S."/>
            <person name="Nusbaum C."/>
        </authorList>
    </citation>
    <scope>NUCLEOTIDE SEQUENCE [LARGE SCALE GENOMIC DNA]</scope>
</reference>
<reference key="5">
    <citation type="journal article" date="2004" name="Genome Res.">
        <title>The status, quality, and expansion of the NIH full-length cDNA project: the Mammalian Gene Collection (MGC).</title>
        <authorList>
            <consortium name="The MGC Project Team"/>
        </authorList>
    </citation>
    <scope>NUCLEOTIDE SEQUENCE [LARGE SCALE MRNA] (ISOFORM 1)</scope>
    <source>
        <tissue>Eye</tissue>
    </source>
</reference>
<reference key="6">
    <citation type="journal article" date="2008" name="J. Proteome Res.">
        <title>Phosphoproteome of resting human platelets.</title>
        <authorList>
            <person name="Zahedi R.P."/>
            <person name="Lewandrowski U."/>
            <person name="Wiesner J."/>
            <person name="Wortelkamp S."/>
            <person name="Moebius J."/>
            <person name="Schuetz C."/>
            <person name="Walter U."/>
            <person name="Gambaryan S."/>
            <person name="Sickmann A."/>
        </authorList>
    </citation>
    <scope>IDENTIFICATION BY MASS SPECTROMETRY [LARGE SCALE ANALYSIS]</scope>
    <source>
        <tissue>Platelet</tissue>
    </source>
</reference>
<reference key="7">
    <citation type="journal article" date="2008" name="Mol. Cell">
        <title>Kinase-selective enrichment enables quantitative phosphoproteomics of the kinome across the cell cycle.</title>
        <authorList>
            <person name="Daub H."/>
            <person name="Olsen J.V."/>
            <person name="Bairlein M."/>
            <person name="Gnad F."/>
            <person name="Oppermann F.S."/>
            <person name="Korner R."/>
            <person name="Greff Z."/>
            <person name="Keri G."/>
            <person name="Stemmann O."/>
            <person name="Mann M."/>
        </authorList>
    </citation>
    <scope>IDENTIFICATION BY MASS SPECTROMETRY [LARGE SCALE ANALYSIS]</scope>
    <source>
        <tissue>Cervix carcinoma</tissue>
    </source>
</reference>
<reference key="8">
    <citation type="journal article" date="2008" name="Proc. Natl. Acad. Sci. U.S.A.">
        <title>A quantitative atlas of mitotic phosphorylation.</title>
        <authorList>
            <person name="Dephoure N."/>
            <person name="Zhou C."/>
            <person name="Villen J."/>
            <person name="Beausoleil S.A."/>
            <person name="Bakalarski C.E."/>
            <person name="Elledge S.J."/>
            <person name="Gygi S.P."/>
        </authorList>
    </citation>
    <scope>PHOSPHORYLATION [LARGE SCALE ANALYSIS] AT SER-114</scope>
    <scope>IDENTIFICATION BY MASS SPECTROMETRY [LARGE SCALE ANALYSIS]</scope>
    <source>
        <tissue>Cervix carcinoma</tissue>
    </source>
</reference>
<reference key="9">
    <citation type="journal article" date="2009" name="Anal. Chem.">
        <title>Lys-N and trypsin cover complementary parts of the phosphoproteome in a refined SCX-based approach.</title>
        <authorList>
            <person name="Gauci S."/>
            <person name="Helbig A.O."/>
            <person name="Slijper M."/>
            <person name="Krijgsveld J."/>
            <person name="Heck A.J."/>
            <person name="Mohammed S."/>
        </authorList>
    </citation>
    <scope>IDENTIFICATION BY MASS SPECTROMETRY [LARGE SCALE ANALYSIS]</scope>
</reference>
<reference key="10">
    <citation type="journal article" date="2009" name="Sci. Signal.">
        <title>Quantitative phosphoproteomic analysis of T cell receptor signaling reveals system-wide modulation of protein-protein interactions.</title>
        <authorList>
            <person name="Mayya V."/>
            <person name="Lundgren D.H."/>
            <person name="Hwang S.-I."/>
            <person name="Rezaul K."/>
            <person name="Wu L."/>
            <person name="Eng J.K."/>
            <person name="Rodionov V."/>
            <person name="Han D.K."/>
        </authorList>
    </citation>
    <scope>PHOSPHORYLATION [LARGE SCALE ANALYSIS] AT SER-114</scope>
    <scope>IDENTIFICATION BY MASS SPECTROMETRY [LARGE SCALE ANALYSIS]</scope>
    <source>
        <tissue>Leukemic T-cell</tissue>
    </source>
</reference>
<reference key="11">
    <citation type="journal article" date="2010" name="Sci. Signal.">
        <title>Quantitative phosphoproteomics reveals widespread full phosphorylation site occupancy during mitosis.</title>
        <authorList>
            <person name="Olsen J.V."/>
            <person name="Vermeulen M."/>
            <person name="Santamaria A."/>
            <person name="Kumar C."/>
            <person name="Miller M.L."/>
            <person name="Jensen L.J."/>
            <person name="Gnad F."/>
            <person name="Cox J."/>
            <person name="Jensen T.S."/>
            <person name="Nigg E.A."/>
            <person name="Brunak S."/>
            <person name="Mann M."/>
        </authorList>
    </citation>
    <scope>IDENTIFICATION BY MASS SPECTROMETRY [LARGE SCALE ANALYSIS]</scope>
    <source>
        <tissue>Cervix carcinoma</tissue>
    </source>
</reference>
<reference key="12">
    <citation type="journal article" date="2011" name="Sci. Signal.">
        <title>System-wide temporal characterization of the proteome and phosphoproteome of human embryonic stem cell differentiation.</title>
        <authorList>
            <person name="Rigbolt K.T."/>
            <person name="Prokhorova T.A."/>
            <person name="Akimov V."/>
            <person name="Henningsen J."/>
            <person name="Johansen P.T."/>
            <person name="Kratchmarova I."/>
            <person name="Kassem M."/>
            <person name="Mann M."/>
            <person name="Olsen J.V."/>
            <person name="Blagoev B."/>
        </authorList>
    </citation>
    <scope>PHOSPHORYLATION [LARGE SCALE ANALYSIS] AT SER-114</scope>
    <scope>IDENTIFICATION BY MASS SPECTROMETRY [LARGE SCALE ANALYSIS]</scope>
</reference>
<reference key="13">
    <citation type="journal article" date="2013" name="J. Proteome Res.">
        <title>Toward a comprehensive characterization of a human cancer cell phosphoproteome.</title>
        <authorList>
            <person name="Zhou H."/>
            <person name="Di Palma S."/>
            <person name="Preisinger C."/>
            <person name="Peng M."/>
            <person name="Polat A.N."/>
            <person name="Heck A.J."/>
            <person name="Mohammed S."/>
        </authorList>
    </citation>
    <scope>PHOSPHORYLATION [LARGE SCALE ANALYSIS] AT SER-114</scope>
    <scope>IDENTIFICATION BY MASS SPECTROMETRY [LARGE SCALE ANALYSIS]</scope>
    <source>
        <tissue>Cervix carcinoma</tissue>
        <tissue>Erythroleukemia</tissue>
    </source>
</reference>
<reference key="14">
    <citation type="journal article" date="2014" name="J. Proteomics">
        <title>An enzyme assisted RP-RPLC approach for in-depth analysis of human liver phosphoproteome.</title>
        <authorList>
            <person name="Bian Y."/>
            <person name="Song C."/>
            <person name="Cheng K."/>
            <person name="Dong M."/>
            <person name="Wang F."/>
            <person name="Huang J."/>
            <person name="Sun D."/>
            <person name="Wang L."/>
            <person name="Ye M."/>
            <person name="Zou H."/>
        </authorList>
    </citation>
    <scope>PHOSPHORYLATION [LARGE SCALE ANALYSIS] AT SER-41; SER-77; THR-87; SER-89; SER-92 AND SER-114</scope>
    <scope>IDENTIFICATION BY MASS SPECTROMETRY [LARGE SCALE ANALYSIS]</scope>
    <source>
        <tissue>Liver</tissue>
    </source>
</reference>
<sequence length="314" mass="36018">MEGVELKEEWQDEDFPIPLPEDDSIEADILAITGPEDQPGSLEVNGNKVRKKLMAPDISLTLDPSDGSVLSDDLDESGEIDLDGLDTPSENSNEFEWEDDLPKPKTTEVIRKGSITEYTAAEEKEDGRRWRMFRIGEQDHRVDMKAIEPYKKVISHGGYYGDGLNAIVVFAVCFMPESSQPNYRYLMDNLFKYVIGTLELLVAENYMIVYLNGATTRRKMPSLGWLRKCYQQIDRRLRKNLKSLIIVHPSWFIRTLLAVTRPFISSKFSQKIRYVFNLAELAELVPMEYVGIPECIKQVDQELNGKQDEPKNEQ</sequence>
<feature type="chain" id="PRO_0000064961" description="BCL2/adenovirus E1B 19 kDa protein-interacting protein 2">
    <location>
        <begin position="1"/>
        <end position="314"/>
    </location>
</feature>
<feature type="domain" description="CRAL-TRIO" evidence="1">
    <location>
        <begin position="147"/>
        <end position="304"/>
    </location>
</feature>
<feature type="region of interest" description="Disordered" evidence="2">
    <location>
        <begin position="1"/>
        <end position="21"/>
    </location>
</feature>
<feature type="region of interest" description="Disordered" evidence="2">
    <location>
        <begin position="76"/>
        <end position="100"/>
    </location>
</feature>
<feature type="compositionally biased region" description="Acidic residues" evidence="2">
    <location>
        <begin position="10"/>
        <end position="21"/>
    </location>
</feature>
<feature type="modified residue" description="Phosphoserine" evidence="10">
    <location>
        <position position="41"/>
    </location>
</feature>
<feature type="modified residue" description="Phosphoserine" evidence="10">
    <location>
        <position position="77"/>
    </location>
</feature>
<feature type="modified residue" description="Phosphothreonine" evidence="10">
    <location>
        <position position="87"/>
    </location>
</feature>
<feature type="modified residue" description="Phosphoserine" evidence="10">
    <location>
        <position position="89"/>
    </location>
</feature>
<feature type="modified residue" description="Phosphoserine" evidence="10">
    <location>
        <position position="92"/>
    </location>
</feature>
<feature type="modified residue" description="Phosphoserine" evidence="6 7 8 9 10">
    <location>
        <position position="114"/>
    </location>
</feature>
<feature type="splice variant" id="VSP_038964" description="In isoform 2." evidence="4">
    <original>M</original>
    <variation>MEPCPSSAPPPFYPGVGEVAGLRWFSIYDQRPSWYRTKKLGLLDIGSLDYQEFVVDIESRLRM</variation>
    <location>
        <position position="1"/>
    </location>
</feature>
<feature type="sequence variant" id="VAR_018837" description="In dbSNP:rs6151509." evidence="3">
    <original>S</original>
    <variation>T</variation>
    <location>
        <position position="24"/>
    </location>
</feature>
<feature type="sequence conflict" description="In Ref. 2; BAG61556." evidence="5" ref="2">
    <original>M</original>
    <variation>T</variation>
    <location>
        <position position="175"/>
    </location>
</feature>
<proteinExistence type="evidence at protein level"/>
<evidence type="ECO:0000255" key="1">
    <source>
        <dbReference type="PROSITE-ProRule" id="PRU00056"/>
    </source>
</evidence>
<evidence type="ECO:0000256" key="2">
    <source>
        <dbReference type="SAM" id="MobiDB-lite"/>
    </source>
</evidence>
<evidence type="ECO:0000269" key="3">
    <source ref="3"/>
</evidence>
<evidence type="ECO:0000303" key="4">
    <source>
    </source>
</evidence>
<evidence type="ECO:0000305" key="5"/>
<evidence type="ECO:0007744" key="6">
    <source>
    </source>
</evidence>
<evidence type="ECO:0007744" key="7">
    <source>
    </source>
</evidence>
<evidence type="ECO:0007744" key="8">
    <source>
    </source>
</evidence>
<evidence type="ECO:0007744" key="9">
    <source>
    </source>
</evidence>
<evidence type="ECO:0007744" key="10">
    <source>
    </source>
</evidence>
<dbReference type="EMBL" id="U15173">
    <property type="protein sequence ID" value="AAC00021.1"/>
    <property type="molecule type" value="mRNA"/>
</dbReference>
<dbReference type="EMBL" id="AK299628">
    <property type="protein sequence ID" value="BAG61556.1"/>
    <property type="molecule type" value="mRNA"/>
</dbReference>
<dbReference type="EMBL" id="AY268590">
    <property type="protein sequence ID" value="AAP03429.1"/>
    <property type="molecule type" value="Genomic_DNA"/>
</dbReference>
<dbReference type="EMBL" id="AC092755">
    <property type="status" value="NOT_ANNOTATED_CDS"/>
    <property type="molecule type" value="Genomic_DNA"/>
</dbReference>
<dbReference type="EMBL" id="BC002461">
    <property type="protein sequence ID" value="AAH02461.1"/>
    <property type="molecule type" value="mRNA"/>
</dbReference>
<dbReference type="CCDS" id="CCDS10174.3">
    <molecule id="Q12982-1"/>
</dbReference>
<dbReference type="PIR" id="I38864">
    <property type="entry name" value="I38864"/>
</dbReference>
<dbReference type="RefSeq" id="NP_001307604.2">
    <molecule id="Q12982-1"/>
    <property type="nucleotide sequence ID" value="NM_001320675.4"/>
</dbReference>
<dbReference type="RefSeq" id="NP_004321.3">
    <molecule id="Q12982-1"/>
    <property type="nucleotide sequence ID" value="NM_004330.4"/>
</dbReference>
<dbReference type="BioGRID" id="107131">
    <property type="interactions" value="73"/>
</dbReference>
<dbReference type="CORUM" id="Q12982"/>
<dbReference type="ELM" id="Q12982"/>
<dbReference type="FunCoup" id="Q12982">
    <property type="interactions" value="3982"/>
</dbReference>
<dbReference type="IntAct" id="Q12982">
    <property type="interactions" value="54"/>
</dbReference>
<dbReference type="MINT" id="Q12982"/>
<dbReference type="STRING" id="9606.ENSP00000267859"/>
<dbReference type="SwissLipids" id="SLP:000001512"/>
<dbReference type="GlyGen" id="Q12982">
    <property type="glycosylation" value="1 site, 1 O-linked glycan (1 site)"/>
</dbReference>
<dbReference type="iPTMnet" id="Q12982"/>
<dbReference type="PhosphoSitePlus" id="Q12982"/>
<dbReference type="BioMuta" id="BNIP2"/>
<dbReference type="DMDM" id="6093506"/>
<dbReference type="jPOST" id="Q12982"/>
<dbReference type="MassIVE" id="Q12982"/>
<dbReference type="PaxDb" id="9606-ENSP00000267859"/>
<dbReference type="PeptideAtlas" id="Q12982"/>
<dbReference type="ProteomicsDB" id="59079">
    <molecule id="Q12982-1"/>
</dbReference>
<dbReference type="ProteomicsDB" id="59080">
    <molecule id="Q12982-2"/>
</dbReference>
<dbReference type="Pumba" id="Q12982"/>
<dbReference type="Antibodypedia" id="12947">
    <property type="antibodies" value="325 antibodies from 29 providers"/>
</dbReference>
<dbReference type="DNASU" id="663"/>
<dbReference type="Ensembl" id="ENST00000415213.7">
    <molecule id="Q12982-1"/>
    <property type="protein sequence ID" value="ENSP00000412767.3"/>
    <property type="gene ID" value="ENSG00000140299.14"/>
</dbReference>
<dbReference type="Ensembl" id="ENST00000607373.6">
    <molecule id="Q12982-1"/>
    <property type="protein sequence ID" value="ENSP00000475320.1"/>
    <property type="gene ID" value="ENSG00000140299.14"/>
</dbReference>
<dbReference type="GeneID" id="663"/>
<dbReference type="KEGG" id="hsa:663"/>
<dbReference type="MANE-Select" id="ENST00000607373.6">
    <property type="protein sequence ID" value="ENSP00000475320.1"/>
    <property type="RefSeq nucleotide sequence ID" value="NM_004330.4"/>
    <property type="RefSeq protein sequence ID" value="NP_004321.3"/>
</dbReference>
<dbReference type="UCSC" id="uc010uhb.3">
    <molecule id="Q12982-1"/>
    <property type="organism name" value="human"/>
</dbReference>
<dbReference type="AGR" id="HGNC:1083"/>
<dbReference type="CTD" id="663"/>
<dbReference type="DisGeNET" id="663"/>
<dbReference type="GeneCards" id="BNIP2"/>
<dbReference type="HGNC" id="HGNC:1083">
    <property type="gene designation" value="BNIP2"/>
</dbReference>
<dbReference type="HPA" id="ENSG00000140299">
    <property type="expression patterns" value="Tissue enhanced (bone)"/>
</dbReference>
<dbReference type="MIM" id="603292">
    <property type="type" value="gene"/>
</dbReference>
<dbReference type="neXtProt" id="NX_Q12982"/>
<dbReference type="OpenTargets" id="ENSG00000140299"/>
<dbReference type="PharmGKB" id="PA25393"/>
<dbReference type="VEuPathDB" id="HostDB:ENSG00000140299"/>
<dbReference type="eggNOG" id="ENOG502QUXY">
    <property type="taxonomic scope" value="Eukaryota"/>
</dbReference>
<dbReference type="GeneTree" id="ENSGT00940000158531"/>
<dbReference type="HOGENOM" id="CLU_039135_1_0_1"/>
<dbReference type="InParanoid" id="Q12982"/>
<dbReference type="OrthoDB" id="19923at2759"/>
<dbReference type="PAN-GO" id="Q12982">
    <property type="GO annotations" value="2 GO annotations based on evolutionary models"/>
</dbReference>
<dbReference type="PhylomeDB" id="Q12982"/>
<dbReference type="PathwayCommons" id="Q12982"/>
<dbReference type="Reactome" id="R-HSA-525793">
    <property type="pathway name" value="Myogenesis"/>
</dbReference>
<dbReference type="SignaLink" id="Q12982"/>
<dbReference type="SIGNOR" id="Q12982"/>
<dbReference type="BioGRID-ORCS" id="663">
    <property type="hits" value="14 hits in 1151 CRISPR screens"/>
</dbReference>
<dbReference type="ChiTaRS" id="BNIP2">
    <property type="organism name" value="human"/>
</dbReference>
<dbReference type="GeneWiki" id="BNIP2"/>
<dbReference type="GenomeRNAi" id="663"/>
<dbReference type="Pharos" id="Q12982">
    <property type="development level" value="Tbio"/>
</dbReference>
<dbReference type="PRO" id="PR:Q12982"/>
<dbReference type="Proteomes" id="UP000005640">
    <property type="component" value="Chromosome 15"/>
</dbReference>
<dbReference type="RNAct" id="Q12982">
    <property type="molecule type" value="protein"/>
</dbReference>
<dbReference type="Bgee" id="ENSG00000140299">
    <property type="expression patterns" value="Expressed in calcaneal tendon and 194 other cell types or tissues"/>
</dbReference>
<dbReference type="ExpressionAtlas" id="Q12982">
    <property type="expression patterns" value="baseline and differential"/>
</dbReference>
<dbReference type="GO" id="GO:0005814">
    <property type="term" value="C:centriole"/>
    <property type="evidence" value="ECO:0007669"/>
    <property type="project" value="Ensembl"/>
</dbReference>
<dbReference type="GO" id="GO:0005737">
    <property type="term" value="C:cytoplasm"/>
    <property type="evidence" value="ECO:0000314"/>
    <property type="project" value="MGI"/>
</dbReference>
<dbReference type="GO" id="GO:0005829">
    <property type="term" value="C:cytosol"/>
    <property type="evidence" value="ECO:0000314"/>
    <property type="project" value="HPA"/>
</dbReference>
<dbReference type="GO" id="GO:0043231">
    <property type="term" value="C:intracellular membrane-bounded organelle"/>
    <property type="evidence" value="ECO:0000314"/>
    <property type="project" value="UniProtKB"/>
</dbReference>
<dbReference type="GO" id="GO:0005635">
    <property type="term" value="C:nuclear envelope"/>
    <property type="evidence" value="ECO:0000314"/>
    <property type="project" value="UniProtKB"/>
</dbReference>
<dbReference type="GO" id="GO:0005730">
    <property type="term" value="C:nucleolus"/>
    <property type="evidence" value="ECO:0000314"/>
    <property type="project" value="HPA"/>
</dbReference>
<dbReference type="GO" id="GO:0048471">
    <property type="term" value="C:perinuclear region of cytoplasm"/>
    <property type="evidence" value="ECO:0007669"/>
    <property type="project" value="UniProtKB-SubCell"/>
</dbReference>
<dbReference type="GO" id="GO:0031616">
    <property type="term" value="C:spindle pole centrosome"/>
    <property type="evidence" value="ECO:0007669"/>
    <property type="project" value="Ensembl"/>
</dbReference>
<dbReference type="GO" id="GO:0005509">
    <property type="term" value="F:calcium ion binding"/>
    <property type="evidence" value="ECO:0000304"/>
    <property type="project" value="UniProtKB"/>
</dbReference>
<dbReference type="GO" id="GO:0005096">
    <property type="term" value="F:GTPase activator activity"/>
    <property type="evidence" value="ECO:0000304"/>
    <property type="project" value="ProtInc"/>
</dbReference>
<dbReference type="GO" id="GO:0006915">
    <property type="term" value="P:apoptotic process"/>
    <property type="evidence" value="ECO:0000318"/>
    <property type="project" value="GO_Central"/>
</dbReference>
<dbReference type="GO" id="GO:0001824">
    <property type="term" value="P:blastocyst development"/>
    <property type="evidence" value="ECO:0007669"/>
    <property type="project" value="Ensembl"/>
</dbReference>
<dbReference type="GO" id="GO:0007098">
    <property type="term" value="P:centrosome cycle"/>
    <property type="evidence" value="ECO:0007669"/>
    <property type="project" value="Ensembl"/>
</dbReference>
<dbReference type="GO" id="GO:0043066">
    <property type="term" value="P:negative regulation of apoptotic process"/>
    <property type="evidence" value="ECO:0000304"/>
    <property type="project" value="UniProtKB"/>
</dbReference>
<dbReference type="GO" id="GO:0043410">
    <property type="term" value="P:positive regulation of MAPK cascade"/>
    <property type="evidence" value="ECO:0007669"/>
    <property type="project" value="Ensembl"/>
</dbReference>
<dbReference type="GO" id="GO:0045666">
    <property type="term" value="P:positive regulation of neuron differentiation"/>
    <property type="evidence" value="ECO:0007669"/>
    <property type="project" value="Ensembl"/>
</dbReference>
<dbReference type="GO" id="GO:0051057">
    <property type="term" value="P:positive regulation of small GTPase mediated signal transduction"/>
    <property type="evidence" value="ECO:0007669"/>
    <property type="project" value="Ensembl"/>
</dbReference>
<dbReference type="GO" id="GO:0090649">
    <property type="term" value="P:response to oxygen-glucose deprivation"/>
    <property type="evidence" value="ECO:0007669"/>
    <property type="project" value="Ensembl"/>
</dbReference>
<dbReference type="GO" id="GO:0051146">
    <property type="term" value="P:striated muscle cell differentiation"/>
    <property type="evidence" value="ECO:0007669"/>
    <property type="project" value="Ensembl"/>
</dbReference>
<dbReference type="CDD" id="cd00170">
    <property type="entry name" value="SEC14"/>
    <property type="match status" value="1"/>
</dbReference>
<dbReference type="FunFam" id="3.40.525.10:FF:000001">
    <property type="entry name" value="BCL2/adenovirus E1B protein-interacting protein 2"/>
    <property type="match status" value="1"/>
</dbReference>
<dbReference type="Gene3D" id="3.40.525.10">
    <property type="entry name" value="CRAL-TRIO lipid binding domain"/>
    <property type="match status" value="1"/>
</dbReference>
<dbReference type="InterPro" id="IPR022181">
    <property type="entry name" value="Bcl2-/adenovirus-E1B"/>
</dbReference>
<dbReference type="InterPro" id="IPR001251">
    <property type="entry name" value="CRAL-TRIO_dom"/>
</dbReference>
<dbReference type="InterPro" id="IPR036865">
    <property type="entry name" value="CRAL-TRIO_dom_sf"/>
</dbReference>
<dbReference type="PANTHER" id="PTHR12112:SF12">
    <property type="entry name" value="BCL2_ADENOVIRUS E1B 19 KDA PROTEIN-INTERACTING PROTEIN 2"/>
    <property type="match status" value="1"/>
</dbReference>
<dbReference type="PANTHER" id="PTHR12112">
    <property type="entry name" value="BNIP - RELATED"/>
    <property type="match status" value="1"/>
</dbReference>
<dbReference type="Pfam" id="PF12496">
    <property type="entry name" value="BNIP2"/>
    <property type="match status" value="1"/>
</dbReference>
<dbReference type="Pfam" id="PF13716">
    <property type="entry name" value="CRAL_TRIO_2"/>
    <property type="match status" value="1"/>
</dbReference>
<dbReference type="SMART" id="SM00516">
    <property type="entry name" value="SEC14"/>
    <property type="match status" value="1"/>
</dbReference>
<dbReference type="SUPFAM" id="SSF52087">
    <property type="entry name" value="CRAL/TRIO domain"/>
    <property type="match status" value="1"/>
</dbReference>
<dbReference type="PROSITE" id="PS50191">
    <property type="entry name" value="CRAL_TRIO"/>
    <property type="match status" value="1"/>
</dbReference>
<keyword id="KW-0025">Alternative splicing</keyword>
<keyword id="KW-0053">Apoptosis</keyword>
<keyword id="KW-0963">Cytoplasm</keyword>
<keyword id="KW-0597">Phosphoprotein</keyword>
<keyword id="KW-1267">Proteomics identification</keyword>
<keyword id="KW-1185">Reference proteome</keyword>
<name>BNIP2_HUMAN</name>
<accession>Q12982</accession>
<accession>B4DS94</accession>
<comment type="function">
    <text>Implicated in the suppression of cell death. Interacts with the BCL-2 and adenovirus E1B 19 kDa proteins.</text>
</comment>
<comment type="interaction">
    <interactant intactId="EBI-752094">
        <id>Q12982</id>
    </interactant>
    <interactant intactId="EBI-7131019">
        <id>Q8TB40</id>
        <label>ABHD4</label>
    </interactant>
    <organismsDiffer>false</organismsDiffer>
    <experiments>3</experiments>
</comment>
<comment type="interaction">
    <interactant intactId="EBI-752094">
        <id>Q12982</id>
    </interactant>
    <interactant intactId="EBI-2803601">
        <id>Q9NRZ7</id>
        <label>AGPAT3</label>
    </interactant>
    <organismsDiffer>false</organismsDiffer>
    <experiments>3</experiments>
</comment>
<comment type="interaction">
    <interactant intactId="EBI-752094">
        <id>Q12982</id>
    </interactant>
    <interactant intactId="EBI-17624977">
        <id>Q9UH17-2</id>
        <label>APOBEC3B</label>
    </interactant>
    <organismsDiffer>false</organismsDiffer>
    <experiments>3</experiments>
</comment>
<comment type="interaction">
    <interactant intactId="EBI-752094">
        <id>Q12982</id>
    </interactant>
    <interactant intactId="EBI-749464">
        <id>Q12983</id>
        <label>BNIP3</label>
    </interactant>
    <organismsDiffer>false</organismsDiffer>
    <experiments>3</experiments>
</comment>
<comment type="interaction">
    <interactant intactId="EBI-752094">
        <id>Q12982</id>
    </interactant>
    <interactant intactId="EBI-12806802">
        <id>P0C671</id>
        <label>BNIP5</label>
    </interactant>
    <organismsDiffer>false</organismsDiffer>
    <experiments>3</experiments>
</comment>
<comment type="interaction">
    <interactant intactId="EBI-752094">
        <id>Q12982</id>
    </interactant>
    <interactant intactId="EBI-17447707">
        <id>Q9H9P2</id>
        <label>CHODL</label>
    </interactant>
    <organismsDiffer>false</organismsDiffer>
    <experiments>3</experiments>
</comment>
<comment type="interaction">
    <interactant intactId="EBI-752094">
        <id>Q12982</id>
    </interactant>
    <interactant intactId="EBI-18013275">
        <id>Q7Z7G2</id>
        <label>CPLX4</label>
    </interactant>
    <organismsDiffer>false</organismsDiffer>
    <experiments>3</experiments>
</comment>
<comment type="interaction">
    <interactant intactId="EBI-752094">
        <id>Q12982</id>
    </interactant>
    <interactant intactId="EBI-1046040">
        <id>P00387</id>
        <label>CYB5R3</label>
    </interactant>
    <organismsDiffer>false</organismsDiffer>
    <experiments>3</experiments>
</comment>
<comment type="interaction">
    <interactant intactId="EBI-752094">
        <id>Q12982</id>
    </interactant>
    <interactant intactId="EBI-12878374">
        <id>Q9BSY9</id>
        <label>DESI2</label>
    </interactant>
    <organismsDiffer>false</organismsDiffer>
    <experiments>3</experiments>
</comment>
<comment type="interaction">
    <interactant intactId="EBI-752094">
        <id>Q12982</id>
    </interactant>
    <interactant intactId="EBI-12831978">
        <id>Q6ZPD8</id>
        <label>DGAT2L6</label>
    </interactant>
    <organismsDiffer>false</organismsDiffer>
    <experiments>3</experiments>
</comment>
<comment type="interaction">
    <interactant intactId="EBI-752094">
        <id>Q12982</id>
    </interactant>
    <interactant intactId="EBI-746300">
        <id>Q96LJ7</id>
        <label>DHRS1</label>
    </interactant>
    <organismsDiffer>false</organismsDiffer>
    <experiments>3</experiments>
</comment>
<comment type="interaction">
    <interactant intactId="EBI-752094">
        <id>Q12982</id>
    </interactant>
    <interactant intactId="EBI-2339413">
        <id>O14681</id>
        <label>EI24</label>
    </interactant>
    <organismsDiffer>false</organismsDiffer>
    <experiments>3</experiments>
</comment>
<comment type="interaction">
    <interactant intactId="EBI-752094">
        <id>Q12982</id>
    </interactant>
    <interactant intactId="EBI-359299">
        <id>O75477</id>
        <label>ERLIN1</label>
    </interactant>
    <organismsDiffer>false</organismsDiffer>
    <experiments>3</experiments>
</comment>
<comment type="interaction">
    <interactant intactId="EBI-752094">
        <id>Q12982</id>
    </interactant>
    <interactant intactId="EBI-12902289">
        <id>Q6P587-2</id>
        <label>FAHD1</label>
    </interactant>
    <organismsDiffer>false</organismsDiffer>
    <experiments>3</experiments>
</comment>
<comment type="interaction">
    <interactant intactId="EBI-752094">
        <id>Q12982</id>
    </interactant>
    <interactant intactId="EBI-18304435">
        <id>Q5JX71</id>
        <label>FAM209A</label>
    </interactant>
    <organismsDiffer>false</organismsDiffer>
    <experiments>3</experiments>
</comment>
<comment type="interaction">
    <interactant intactId="EBI-752094">
        <id>Q12982</id>
    </interactant>
    <interactant intactId="EBI-2876774">
        <id>Q92520</id>
        <label>FAM3C</label>
    </interactant>
    <organismsDiffer>false</organismsDiffer>
    <experiments>3</experiments>
</comment>
<comment type="interaction">
    <interactant intactId="EBI-752094">
        <id>Q12982</id>
    </interactant>
    <interactant intactId="EBI-743099">
        <id>Q969F0</id>
        <label>FATE1</label>
    </interactant>
    <organismsDiffer>false</organismsDiffer>
    <experiments>6</experiments>
</comment>
<comment type="interaction">
    <interactant intactId="EBI-752094">
        <id>Q12982</id>
    </interactant>
    <interactant intactId="EBI-1383583">
        <id>P42685</id>
        <label>FRK</label>
    </interactant>
    <organismsDiffer>false</organismsDiffer>
    <experiments>8</experiments>
</comment>
<comment type="interaction">
    <interactant intactId="EBI-752094">
        <id>Q12982</id>
    </interactant>
    <interactant intactId="EBI-3917143">
        <id>Q5T7V8</id>
        <label>GORAB</label>
    </interactant>
    <organismsDiffer>false</organismsDiffer>
    <experiments>3</experiments>
</comment>
<comment type="interaction">
    <interactant intactId="EBI-752094">
        <id>Q12982</id>
    </interactant>
    <interactant intactId="EBI-13345167">
        <id>Q8TDT2</id>
        <label>GPR152</label>
    </interactant>
    <organismsDiffer>false</organismsDiffer>
    <experiments>3</experiments>
</comment>
<comment type="interaction">
    <interactant intactId="EBI-752094">
        <id>Q12982</id>
    </interactant>
    <interactant intactId="EBI-11721746">
        <id>Q8TED1</id>
        <label>GPX8</label>
    </interactant>
    <organismsDiffer>false</organismsDiffer>
    <experiments>3</experiments>
</comment>
<comment type="interaction">
    <interactant intactId="EBI-752094">
        <id>Q12982</id>
    </interactant>
    <interactant intactId="EBI-11984319">
        <id>Q8IUY3</id>
        <label>GRAMD2A</label>
    </interactant>
    <organismsDiffer>false</organismsDiffer>
    <experiments>3</experiments>
</comment>
<comment type="interaction">
    <interactant intactId="EBI-752094">
        <id>Q12982</id>
    </interactant>
    <interactant intactId="EBI-19954058">
        <id>O15499</id>
        <label>GSC2</label>
    </interactant>
    <organismsDiffer>false</organismsDiffer>
    <experiments>3</experiments>
</comment>
<comment type="interaction">
    <interactant intactId="EBI-752094">
        <id>Q12982</id>
    </interactant>
    <interactant intactId="EBI-3934936">
        <id>O95279</id>
        <label>KCNK5</label>
    </interactant>
    <organismsDiffer>false</organismsDiffer>
    <experiments>3</experiments>
</comment>
<comment type="interaction">
    <interactant intactId="EBI-752094">
        <id>Q12982</id>
    </interactant>
    <interactant intactId="EBI-721019">
        <id>Q07866</id>
        <label>KLC1</label>
    </interactant>
    <organismsDiffer>false</organismsDiffer>
    <experiments>3</experiments>
</comment>
<comment type="interaction">
    <interactant intactId="EBI-752094">
        <id>Q12982</id>
    </interactant>
    <interactant intactId="EBI-11979975">
        <id>Q07866-2</id>
        <label>KLC1</label>
    </interactant>
    <organismsDiffer>false</organismsDiffer>
    <experiments>3</experiments>
</comment>
<comment type="interaction">
    <interactant intactId="EBI-752094">
        <id>Q12982</id>
    </interactant>
    <interactant intactId="EBI-10173166">
        <id>Q5T700</id>
        <label>LDLRAD1</label>
    </interactant>
    <organismsDiffer>false</organismsDiffer>
    <experiments>3</experiments>
</comment>
<comment type="interaction">
    <interactant intactId="EBI-752094">
        <id>Q12982</id>
    </interactant>
    <interactant intactId="EBI-2830566">
        <id>Q9H400</id>
        <label>LIME1</label>
    </interactant>
    <organismsDiffer>false</organismsDiffer>
    <experiments>3</experiments>
</comment>
<comment type="interaction">
    <interactant intactId="EBI-752094">
        <id>Q12982</id>
    </interactant>
    <interactant intactId="EBI-2864512">
        <id>P50221</id>
        <label>MEOX1</label>
    </interactant>
    <organismsDiffer>false</organismsDiffer>
    <experiments>3</experiments>
</comment>
<comment type="interaction">
    <interactant intactId="EBI-752094">
        <id>Q12982</id>
    </interactant>
    <interactant intactId="EBI-16439278">
        <id>Q6FHY5</id>
        <label>MEOX2</label>
    </interactant>
    <organismsDiffer>false</organismsDiffer>
    <experiments>3</experiments>
</comment>
<comment type="interaction">
    <interactant intactId="EBI-752094">
        <id>Q12982</id>
    </interactant>
    <interactant intactId="EBI-311356">
        <id>Q9ULV0</id>
        <label>MYO5B</label>
    </interactant>
    <organismsDiffer>false</organismsDiffer>
    <experiments>5</experiments>
</comment>
<comment type="interaction">
    <interactant intactId="EBI-752094">
        <id>Q12982</id>
    </interactant>
    <interactant intactId="EBI-14093244">
        <id>Q9ULV0-2</id>
        <label>MYO5B</label>
    </interactant>
    <organismsDiffer>false</organismsDiffer>
    <experiments>3</experiments>
</comment>
<comment type="interaction">
    <interactant intactId="EBI-752094">
        <id>Q12982</id>
    </interactant>
    <interactant intactId="EBI-9087860">
        <id>P32243-2</id>
        <label>OTX2</label>
    </interactant>
    <organismsDiffer>false</organismsDiffer>
    <experiments>3</experiments>
</comment>
<comment type="interaction">
    <interactant intactId="EBI-752094">
        <id>Q12982</id>
    </interactant>
    <interactant intactId="EBI-594836">
        <id>O00623</id>
        <label>PEX12</label>
    </interactant>
    <organismsDiffer>false</organismsDiffer>
    <experiments>3</experiments>
</comment>
<comment type="interaction">
    <interactant intactId="EBI-752094">
        <id>Q12982</id>
    </interactant>
    <interactant intactId="EBI-949945">
        <id>Q53GL0</id>
        <label>PLEKHO1</label>
    </interactant>
    <organismsDiffer>false</organismsDiffer>
    <experiments>3</experiments>
</comment>
<comment type="interaction">
    <interactant intactId="EBI-752094">
        <id>Q12982</id>
    </interactant>
    <interactant intactId="EBI-12816371">
        <id>Q8TDF6-2</id>
        <label>RASGRP4</label>
    </interactant>
    <organismsDiffer>false</organismsDiffer>
    <experiments>3</experiments>
</comment>
<comment type="interaction">
    <interactant intactId="EBI-752094">
        <id>Q12982</id>
    </interactant>
    <interactant intactId="EBI-4402330">
        <id>O95562</id>
        <label>SFT2D2</label>
    </interactant>
    <organismsDiffer>false</organismsDiffer>
    <experiments>3</experiments>
</comment>
<comment type="interaction">
    <interactant intactId="EBI-752094">
        <id>Q12982</id>
    </interactant>
    <interactant intactId="EBI-13384308">
        <id>H3BQL7</id>
        <label>SIN3A</label>
    </interactant>
    <organismsDiffer>false</organismsDiffer>
    <experiments>3</experiments>
</comment>
<comment type="interaction">
    <interactant intactId="EBI-752094">
        <id>Q12982</id>
    </interactant>
    <interactant intactId="EBI-13389236">
        <id>Q7Z769</id>
        <label>SLC35E3</label>
    </interactant>
    <organismsDiffer>false</organismsDiffer>
    <experiments>3</experiments>
</comment>
<comment type="interaction">
    <interactant intactId="EBI-752094">
        <id>Q12982</id>
    </interactant>
    <interactant intactId="EBI-2823239">
        <id>Q9NUM3</id>
        <label>SLC39A9</label>
    </interactant>
    <organismsDiffer>false</organismsDiffer>
    <experiments>3</experiments>
</comment>
<comment type="interaction">
    <interactant intactId="EBI-752094">
        <id>Q12982</id>
    </interactant>
    <interactant intactId="EBI-5235586">
        <id>Q8TBB6</id>
        <label>SLC7A14</label>
    </interactant>
    <organismsDiffer>false</organismsDiffer>
    <experiments>3</experiments>
</comment>
<comment type="interaction">
    <interactant intactId="EBI-752094">
        <id>Q12982</id>
    </interactant>
    <interactant intactId="EBI-524909">
        <id>P21579</id>
        <label>SYT1</label>
    </interactant>
    <organismsDiffer>false</organismsDiffer>
    <experiments>3</experiments>
</comment>
<comment type="interaction">
    <interactant intactId="EBI-752094">
        <id>Q12982</id>
    </interactant>
    <interactant intactId="EBI-8032987">
        <id>Q8N9I0</id>
        <label>SYT2</label>
    </interactant>
    <organismsDiffer>false</organismsDiffer>
    <experiments>3</experiments>
</comment>
<comment type="interaction">
    <interactant intactId="EBI-752094">
        <id>Q12982</id>
    </interactant>
    <interactant intactId="EBI-10982110">
        <id>Q96Q45-2</id>
        <label>TMEM237</label>
    </interactant>
    <organismsDiffer>false</organismsDiffer>
    <experiments>3</experiments>
</comment>
<comment type="interaction">
    <interactant intactId="EBI-752094">
        <id>Q12982</id>
    </interactant>
    <interactant intactId="EBI-12345267">
        <id>O15393-2</id>
        <label>TMPRSS2</label>
    </interactant>
    <organismsDiffer>false</organismsDiffer>
    <experiments>3</experiments>
</comment>
<comment type="interaction">
    <interactant intactId="EBI-752094">
        <id>Q12982</id>
    </interactant>
    <interactant intactId="EBI-6447886">
        <id>Q9Y320</id>
        <label>TMX2</label>
    </interactant>
    <organismsDiffer>false</organismsDiffer>
    <experiments>3</experiments>
</comment>
<comment type="interaction">
    <interactant intactId="EBI-752094">
        <id>Q12982</id>
    </interactant>
    <interactant intactId="EBI-2799703">
        <id>O95070</id>
        <label>YIF1A</label>
    </interactant>
    <organismsDiffer>false</organismsDiffer>
    <experiments>3</experiments>
</comment>
<comment type="interaction">
    <interactant intactId="EBI-752094">
        <id>Q12982</id>
    </interactant>
    <interactant intactId="EBI-10175711">
        <id>B2R9H7</id>
    </interactant>
    <organismsDiffer>false</organismsDiffer>
    <experiments>3</experiments>
</comment>
<comment type="subcellular location">
    <subcellularLocation>
        <location>Cytoplasm</location>
    </subcellularLocation>
    <subcellularLocation>
        <location>Cytoplasm</location>
        <location>Perinuclear region</location>
    </subcellularLocation>
    <text>Localizes to the nuclear envelope region and to other cytoplasmic structures.</text>
</comment>
<comment type="alternative products">
    <event type="alternative splicing"/>
    <isoform>
        <id>Q12982-1</id>
        <name>1</name>
        <sequence type="displayed"/>
    </isoform>
    <isoform>
        <id>Q12982-2</id>
        <name>2</name>
        <sequence type="described" ref="VSP_038964"/>
    </isoform>
</comment>
<gene>
    <name type="primary">BNIP2</name>
    <name type="synonym">NIP2</name>
</gene>